<feature type="chain" id="PRO_1000201908" description="Acetate kinase">
    <location>
        <begin position="1"/>
        <end position="400"/>
    </location>
</feature>
<feature type="active site" description="Proton donor/acceptor" evidence="1">
    <location>
        <position position="150"/>
    </location>
</feature>
<feature type="binding site" evidence="1">
    <location>
        <position position="10"/>
    </location>
    <ligand>
        <name>Mg(2+)</name>
        <dbReference type="ChEBI" id="CHEBI:18420"/>
    </ligand>
</feature>
<feature type="binding site" evidence="1">
    <location>
        <position position="17"/>
    </location>
    <ligand>
        <name>ATP</name>
        <dbReference type="ChEBI" id="CHEBI:30616"/>
    </ligand>
</feature>
<feature type="binding site" evidence="1">
    <location>
        <position position="91"/>
    </location>
    <ligand>
        <name>substrate</name>
    </ligand>
</feature>
<feature type="binding site" evidence="1">
    <location>
        <begin position="210"/>
        <end position="214"/>
    </location>
    <ligand>
        <name>ATP</name>
        <dbReference type="ChEBI" id="CHEBI:30616"/>
    </ligand>
</feature>
<feature type="binding site" evidence="1">
    <location>
        <begin position="285"/>
        <end position="287"/>
    </location>
    <ligand>
        <name>ATP</name>
        <dbReference type="ChEBI" id="CHEBI:30616"/>
    </ligand>
</feature>
<feature type="binding site" evidence="1">
    <location>
        <begin position="333"/>
        <end position="337"/>
    </location>
    <ligand>
        <name>ATP</name>
        <dbReference type="ChEBI" id="CHEBI:30616"/>
    </ligand>
</feature>
<feature type="binding site" evidence="1">
    <location>
        <position position="387"/>
    </location>
    <ligand>
        <name>Mg(2+)</name>
        <dbReference type="ChEBI" id="CHEBI:18420"/>
    </ligand>
</feature>
<feature type="site" description="Transition state stabilizer" evidence="1">
    <location>
        <position position="182"/>
    </location>
</feature>
<feature type="site" description="Transition state stabilizer" evidence="1">
    <location>
        <position position="243"/>
    </location>
</feature>
<gene>
    <name evidence="1" type="primary">ackA</name>
    <name type="ordered locus">PC1_2780</name>
</gene>
<proteinExistence type="inferred from homology"/>
<reference key="1">
    <citation type="submission" date="2009-07" db="EMBL/GenBank/DDBJ databases">
        <title>Complete sequence of Pectobacterium carotovorum subsp. carotovorum PC1.</title>
        <authorList>
            <consortium name="US DOE Joint Genome Institute"/>
            <person name="Lucas S."/>
            <person name="Copeland A."/>
            <person name="Lapidus A."/>
            <person name="Glavina del Rio T."/>
            <person name="Tice H."/>
            <person name="Bruce D."/>
            <person name="Goodwin L."/>
            <person name="Pitluck S."/>
            <person name="Munk A.C."/>
            <person name="Brettin T."/>
            <person name="Detter J.C."/>
            <person name="Han C."/>
            <person name="Tapia R."/>
            <person name="Larimer F."/>
            <person name="Land M."/>
            <person name="Hauser L."/>
            <person name="Kyrpides N."/>
            <person name="Mikhailova N."/>
            <person name="Balakrishnan V."/>
            <person name="Glasner J."/>
            <person name="Perna N.T."/>
        </authorList>
    </citation>
    <scope>NUCLEOTIDE SEQUENCE [LARGE SCALE GENOMIC DNA]</scope>
    <source>
        <strain>PC1</strain>
    </source>
</reference>
<comment type="function">
    <text evidence="1">Catalyzes the formation of acetyl phosphate from acetate and ATP. Can also catalyze the reverse reaction.</text>
</comment>
<comment type="catalytic activity">
    <reaction evidence="1">
        <text>acetate + ATP = acetyl phosphate + ADP</text>
        <dbReference type="Rhea" id="RHEA:11352"/>
        <dbReference type="ChEBI" id="CHEBI:22191"/>
        <dbReference type="ChEBI" id="CHEBI:30089"/>
        <dbReference type="ChEBI" id="CHEBI:30616"/>
        <dbReference type="ChEBI" id="CHEBI:456216"/>
        <dbReference type="EC" id="2.7.2.1"/>
    </reaction>
</comment>
<comment type="cofactor">
    <cofactor evidence="1">
        <name>Mg(2+)</name>
        <dbReference type="ChEBI" id="CHEBI:18420"/>
    </cofactor>
    <cofactor evidence="1">
        <name>Mn(2+)</name>
        <dbReference type="ChEBI" id="CHEBI:29035"/>
    </cofactor>
    <text evidence="1">Mg(2+). Can also accept Mn(2+).</text>
</comment>
<comment type="pathway">
    <text evidence="1">Metabolic intermediate biosynthesis; acetyl-CoA biosynthesis; acetyl-CoA from acetate: step 1/2.</text>
</comment>
<comment type="subunit">
    <text evidence="1">Homodimer.</text>
</comment>
<comment type="subcellular location">
    <subcellularLocation>
        <location evidence="1">Cytoplasm</location>
    </subcellularLocation>
</comment>
<comment type="similarity">
    <text evidence="1">Belongs to the acetokinase family.</text>
</comment>
<organism>
    <name type="scientific">Pectobacterium carotovorum subsp. carotovorum (strain PC1)</name>
    <dbReference type="NCBI Taxonomy" id="561230"/>
    <lineage>
        <taxon>Bacteria</taxon>
        <taxon>Pseudomonadati</taxon>
        <taxon>Pseudomonadota</taxon>
        <taxon>Gammaproteobacteria</taxon>
        <taxon>Enterobacterales</taxon>
        <taxon>Pectobacteriaceae</taxon>
        <taxon>Pectobacterium</taxon>
    </lineage>
</organism>
<sequence length="400" mass="43498">MSSKLVLVLNCGSSSLKFAIIDAINGEEYLSGLAECFNLPEARIKWKMDGGKHDAELGAGAAHSEALNFIVNTILSQKPELSAQLVAIGHRIVHGGEKFTQSAIITDDVLQGIKDSVPFAPLHNPAHLIGIEEALKSFPHLADKNVAVFDTAFHQTMPEESYLYALPYKLYKENHIRRYGFHGTSHYFVSREAAKVLNKPVEELNVITCHLGNGGSVTAIRNGECVDTSMGLTPLEGLVMGTRCGDIDPAVIFHLHDALGMDVASINKLLTKESGLQGLTEVTSDCRYVEDNYETKADAKRAMDVYCHRLAKYIGSYSALMEGRLDAVIFTGGIGENAAMVRELSLKKLGLLGFDVDHERNLAARFGKGGNIAKDGTRPALVIPTNEELVIAEDAYRLTA</sequence>
<keyword id="KW-0067">ATP-binding</keyword>
<keyword id="KW-0963">Cytoplasm</keyword>
<keyword id="KW-0418">Kinase</keyword>
<keyword id="KW-0460">Magnesium</keyword>
<keyword id="KW-0479">Metal-binding</keyword>
<keyword id="KW-0547">Nucleotide-binding</keyword>
<keyword id="KW-0808">Transferase</keyword>
<name>ACKA_PECCP</name>
<evidence type="ECO:0000255" key="1">
    <source>
        <dbReference type="HAMAP-Rule" id="MF_00020"/>
    </source>
</evidence>
<dbReference type="EC" id="2.7.2.1" evidence="1"/>
<dbReference type="EMBL" id="CP001657">
    <property type="protein sequence ID" value="ACT13810.1"/>
    <property type="molecule type" value="Genomic_DNA"/>
</dbReference>
<dbReference type="RefSeq" id="WP_015840972.1">
    <property type="nucleotide sequence ID" value="NC_012917.1"/>
</dbReference>
<dbReference type="SMR" id="C6DA54"/>
<dbReference type="STRING" id="561230.PC1_2780"/>
<dbReference type="GeneID" id="67793333"/>
<dbReference type="KEGG" id="pct:PC1_2780"/>
<dbReference type="eggNOG" id="COG0282">
    <property type="taxonomic scope" value="Bacteria"/>
</dbReference>
<dbReference type="HOGENOM" id="CLU_020352_0_1_6"/>
<dbReference type="OrthoDB" id="9802453at2"/>
<dbReference type="UniPathway" id="UPA00340">
    <property type="reaction ID" value="UER00458"/>
</dbReference>
<dbReference type="Proteomes" id="UP000002736">
    <property type="component" value="Chromosome"/>
</dbReference>
<dbReference type="GO" id="GO:0005829">
    <property type="term" value="C:cytosol"/>
    <property type="evidence" value="ECO:0007669"/>
    <property type="project" value="TreeGrafter"/>
</dbReference>
<dbReference type="GO" id="GO:0008776">
    <property type="term" value="F:acetate kinase activity"/>
    <property type="evidence" value="ECO:0007669"/>
    <property type="project" value="UniProtKB-UniRule"/>
</dbReference>
<dbReference type="GO" id="GO:0005524">
    <property type="term" value="F:ATP binding"/>
    <property type="evidence" value="ECO:0007669"/>
    <property type="project" value="UniProtKB-KW"/>
</dbReference>
<dbReference type="GO" id="GO:0000287">
    <property type="term" value="F:magnesium ion binding"/>
    <property type="evidence" value="ECO:0007669"/>
    <property type="project" value="UniProtKB-UniRule"/>
</dbReference>
<dbReference type="GO" id="GO:0006083">
    <property type="term" value="P:acetate metabolic process"/>
    <property type="evidence" value="ECO:0007669"/>
    <property type="project" value="TreeGrafter"/>
</dbReference>
<dbReference type="GO" id="GO:0006085">
    <property type="term" value="P:acetyl-CoA biosynthetic process"/>
    <property type="evidence" value="ECO:0007669"/>
    <property type="project" value="UniProtKB-UniRule"/>
</dbReference>
<dbReference type="CDD" id="cd24010">
    <property type="entry name" value="ASKHA_NBD_AcK_PK"/>
    <property type="match status" value="1"/>
</dbReference>
<dbReference type="FunFam" id="3.30.420.40:FF:000041">
    <property type="entry name" value="Acetate kinase"/>
    <property type="match status" value="1"/>
</dbReference>
<dbReference type="FunFam" id="3.30.420.40:FF:000042">
    <property type="entry name" value="Acetate kinase"/>
    <property type="match status" value="1"/>
</dbReference>
<dbReference type="Gene3D" id="3.30.420.40">
    <property type="match status" value="2"/>
</dbReference>
<dbReference type="HAMAP" id="MF_00020">
    <property type="entry name" value="Acetate_kinase"/>
    <property type="match status" value="1"/>
</dbReference>
<dbReference type="InterPro" id="IPR004372">
    <property type="entry name" value="Ac/propionate_kinase"/>
</dbReference>
<dbReference type="InterPro" id="IPR000890">
    <property type="entry name" value="Aliphatic_acid_kin_short-chain"/>
</dbReference>
<dbReference type="InterPro" id="IPR023865">
    <property type="entry name" value="Aliphatic_acid_kinase_CS"/>
</dbReference>
<dbReference type="InterPro" id="IPR043129">
    <property type="entry name" value="ATPase_NBD"/>
</dbReference>
<dbReference type="NCBIfam" id="TIGR00016">
    <property type="entry name" value="ackA"/>
    <property type="match status" value="1"/>
</dbReference>
<dbReference type="PANTHER" id="PTHR21060">
    <property type="entry name" value="ACETATE KINASE"/>
    <property type="match status" value="1"/>
</dbReference>
<dbReference type="PANTHER" id="PTHR21060:SF21">
    <property type="entry name" value="ACETATE KINASE"/>
    <property type="match status" value="1"/>
</dbReference>
<dbReference type="Pfam" id="PF00871">
    <property type="entry name" value="Acetate_kinase"/>
    <property type="match status" value="1"/>
</dbReference>
<dbReference type="PIRSF" id="PIRSF000722">
    <property type="entry name" value="Acetate_prop_kin"/>
    <property type="match status" value="1"/>
</dbReference>
<dbReference type="PRINTS" id="PR00471">
    <property type="entry name" value="ACETATEKNASE"/>
</dbReference>
<dbReference type="SUPFAM" id="SSF53067">
    <property type="entry name" value="Actin-like ATPase domain"/>
    <property type="match status" value="2"/>
</dbReference>
<dbReference type="PROSITE" id="PS01075">
    <property type="entry name" value="ACETATE_KINASE_1"/>
    <property type="match status" value="1"/>
</dbReference>
<dbReference type="PROSITE" id="PS01076">
    <property type="entry name" value="ACETATE_KINASE_2"/>
    <property type="match status" value="1"/>
</dbReference>
<accession>C6DA54</accession>
<protein>
    <recommendedName>
        <fullName evidence="1">Acetate kinase</fullName>
        <ecNumber evidence="1">2.7.2.1</ecNumber>
    </recommendedName>
    <alternativeName>
        <fullName evidence="1">Acetokinase</fullName>
    </alternativeName>
</protein>